<sequence>MSRVCQVTGKRPVTGNNRSHALNATKRRFLPNLHSHRFWVESEKRFVTLRVSAKGMRVIDKKGIDTVLAELRARGEKY</sequence>
<accession>B7NEU1</accession>
<comment type="similarity">
    <text evidence="1">Belongs to the bacterial ribosomal protein bL28 family.</text>
</comment>
<reference key="1">
    <citation type="journal article" date="2009" name="PLoS Genet.">
        <title>Organised genome dynamics in the Escherichia coli species results in highly diverse adaptive paths.</title>
        <authorList>
            <person name="Touchon M."/>
            <person name="Hoede C."/>
            <person name="Tenaillon O."/>
            <person name="Barbe V."/>
            <person name="Baeriswyl S."/>
            <person name="Bidet P."/>
            <person name="Bingen E."/>
            <person name="Bonacorsi S."/>
            <person name="Bouchier C."/>
            <person name="Bouvet O."/>
            <person name="Calteau A."/>
            <person name="Chiapello H."/>
            <person name="Clermont O."/>
            <person name="Cruveiller S."/>
            <person name="Danchin A."/>
            <person name="Diard M."/>
            <person name="Dossat C."/>
            <person name="Karoui M.E."/>
            <person name="Frapy E."/>
            <person name="Garry L."/>
            <person name="Ghigo J.M."/>
            <person name="Gilles A.M."/>
            <person name="Johnson J."/>
            <person name="Le Bouguenec C."/>
            <person name="Lescat M."/>
            <person name="Mangenot S."/>
            <person name="Martinez-Jehanne V."/>
            <person name="Matic I."/>
            <person name="Nassif X."/>
            <person name="Oztas S."/>
            <person name="Petit M.A."/>
            <person name="Pichon C."/>
            <person name="Rouy Z."/>
            <person name="Ruf C.S."/>
            <person name="Schneider D."/>
            <person name="Tourret J."/>
            <person name="Vacherie B."/>
            <person name="Vallenet D."/>
            <person name="Medigue C."/>
            <person name="Rocha E.P.C."/>
            <person name="Denamur E."/>
        </authorList>
    </citation>
    <scope>NUCLEOTIDE SEQUENCE [LARGE SCALE GENOMIC DNA]</scope>
    <source>
        <strain>UMN026 / ExPEC</strain>
    </source>
</reference>
<proteinExistence type="inferred from homology"/>
<organism>
    <name type="scientific">Escherichia coli O17:K52:H18 (strain UMN026 / ExPEC)</name>
    <dbReference type="NCBI Taxonomy" id="585056"/>
    <lineage>
        <taxon>Bacteria</taxon>
        <taxon>Pseudomonadati</taxon>
        <taxon>Pseudomonadota</taxon>
        <taxon>Gammaproteobacteria</taxon>
        <taxon>Enterobacterales</taxon>
        <taxon>Enterobacteriaceae</taxon>
        <taxon>Escherichia</taxon>
    </lineage>
</organism>
<name>RL28_ECOLU</name>
<protein>
    <recommendedName>
        <fullName evidence="1">Large ribosomal subunit protein bL28</fullName>
    </recommendedName>
    <alternativeName>
        <fullName evidence="2">50S ribosomal protein L28</fullName>
    </alternativeName>
</protein>
<dbReference type="EMBL" id="CU928163">
    <property type="protein sequence ID" value="CAR15292.1"/>
    <property type="molecule type" value="Genomic_DNA"/>
</dbReference>
<dbReference type="RefSeq" id="WP_000091955.1">
    <property type="nucleotide sequence ID" value="NC_011751.1"/>
</dbReference>
<dbReference type="RefSeq" id="YP_002414790.1">
    <property type="nucleotide sequence ID" value="NC_011751.1"/>
</dbReference>
<dbReference type="SMR" id="B7NEU1"/>
<dbReference type="STRING" id="585056.ECUMN_4151"/>
<dbReference type="GeneID" id="93778350"/>
<dbReference type="KEGG" id="eum:ECUMN_4151"/>
<dbReference type="PATRIC" id="fig|585056.7.peg.4326"/>
<dbReference type="HOGENOM" id="CLU_064548_3_1_6"/>
<dbReference type="Proteomes" id="UP000007097">
    <property type="component" value="Chromosome"/>
</dbReference>
<dbReference type="GO" id="GO:0022625">
    <property type="term" value="C:cytosolic large ribosomal subunit"/>
    <property type="evidence" value="ECO:0007669"/>
    <property type="project" value="TreeGrafter"/>
</dbReference>
<dbReference type="GO" id="GO:0003735">
    <property type="term" value="F:structural constituent of ribosome"/>
    <property type="evidence" value="ECO:0007669"/>
    <property type="project" value="InterPro"/>
</dbReference>
<dbReference type="GO" id="GO:0006412">
    <property type="term" value="P:translation"/>
    <property type="evidence" value="ECO:0007669"/>
    <property type="project" value="UniProtKB-UniRule"/>
</dbReference>
<dbReference type="FunFam" id="2.30.170.40:FF:000001">
    <property type="entry name" value="50S ribosomal protein L28"/>
    <property type="match status" value="1"/>
</dbReference>
<dbReference type="Gene3D" id="2.30.170.40">
    <property type="entry name" value="Ribosomal protein L28/L24"/>
    <property type="match status" value="1"/>
</dbReference>
<dbReference type="HAMAP" id="MF_00373">
    <property type="entry name" value="Ribosomal_bL28"/>
    <property type="match status" value="1"/>
</dbReference>
<dbReference type="InterPro" id="IPR026569">
    <property type="entry name" value="Ribosomal_bL28"/>
</dbReference>
<dbReference type="InterPro" id="IPR034704">
    <property type="entry name" value="Ribosomal_bL28/bL31-like_sf"/>
</dbReference>
<dbReference type="InterPro" id="IPR001383">
    <property type="entry name" value="Ribosomal_bL28_bact-type"/>
</dbReference>
<dbReference type="InterPro" id="IPR037147">
    <property type="entry name" value="Ribosomal_bL28_sf"/>
</dbReference>
<dbReference type="NCBIfam" id="TIGR00009">
    <property type="entry name" value="L28"/>
    <property type="match status" value="1"/>
</dbReference>
<dbReference type="PANTHER" id="PTHR13528">
    <property type="entry name" value="39S RIBOSOMAL PROTEIN L28, MITOCHONDRIAL"/>
    <property type="match status" value="1"/>
</dbReference>
<dbReference type="PANTHER" id="PTHR13528:SF2">
    <property type="entry name" value="LARGE RIBOSOMAL SUBUNIT PROTEIN BL28M"/>
    <property type="match status" value="1"/>
</dbReference>
<dbReference type="Pfam" id="PF00830">
    <property type="entry name" value="Ribosomal_L28"/>
    <property type="match status" value="1"/>
</dbReference>
<dbReference type="SUPFAM" id="SSF143800">
    <property type="entry name" value="L28p-like"/>
    <property type="match status" value="1"/>
</dbReference>
<gene>
    <name evidence="1" type="primary">rpmB</name>
    <name type="ordered locus">ECUMN_4151</name>
</gene>
<feature type="chain" id="PRO_1000121630" description="Large ribosomal subunit protein bL28">
    <location>
        <begin position="1"/>
        <end position="78"/>
    </location>
</feature>
<keyword id="KW-0687">Ribonucleoprotein</keyword>
<keyword id="KW-0689">Ribosomal protein</keyword>
<evidence type="ECO:0000255" key="1">
    <source>
        <dbReference type="HAMAP-Rule" id="MF_00373"/>
    </source>
</evidence>
<evidence type="ECO:0000305" key="2"/>